<proteinExistence type="inferred from homology"/>
<feature type="chain" id="PRO_1000018890" description="Bifunctional purine biosynthesis protein PurH">
    <location>
        <begin position="1"/>
        <end position="529"/>
    </location>
</feature>
<feature type="domain" description="MGS-like" evidence="2">
    <location>
        <begin position="1"/>
        <end position="148"/>
    </location>
</feature>
<keyword id="KW-0378">Hydrolase</keyword>
<keyword id="KW-0511">Multifunctional enzyme</keyword>
<keyword id="KW-0658">Purine biosynthesis</keyword>
<keyword id="KW-1185">Reference proteome</keyword>
<keyword id="KW-0808">Transferase</keyword>
<protein>
    <recommendedName>
        <fullName evidence="1">Bifunctional purine biosynthesis protein PurH</fullName>
    </recommendedName>
    <domain>
        <recommendedName>
            <fullName evidence="1">Phosphoribosylaminoimidazolecarboxamide formyltransferase</fullName>
            <ecNumber evidence="1">2.1.2.3</ecNumber>
        </recommendedName>
        <alternativeName>
            <fullName evidence="1">AICAR transformylase</fullName>
        </alternativeName>
    </domain>
    <domain>
        <recommendedName>
            <fullName evidence="1">IMP cyclohydrolase</fullName>
            <ecNumber evidence="1">3.5.4.10</ecNumber>
        </recommendedName>
        <alternativeName>
            <fullName evidence="1">ATIC</fullName>
        </alternativeName>
        <alternativeName>
            <fullName evidence="1">IMP synthase</fullName>
        </alternativeName>
        <alternativeName>
            <fullName evidence="1">Inosinicase</fullName>
        </alternativeName>
    </domain>
</protein>
<name>PUR9_CROS8</name>
<organism>
    <name type="scientific">Cronobacter sakazakii (strain ATCC BAA-894)</name>
    <name type="common">Enterobacter sakazakii</name>
    <dbReference type="NCBI Taxonomy" id="290339"/>
    <lineage>
        <taxon>Bacteria</taxon>
        <taxon>Pseudomonadati</taxon>
        <taxon>Pseudomonadota</taxon>
        <taxon>Gammaproteobacteria</taxon>
        <taxon>Enterobacterales</taxon>
        <taxon>Enterobacteriaceae</taxon>
        <taxon>Cronobacter</taxon>
    </lineage>
</organism>
<comment type="catalytic activity">
    <reaction evidence="1">
        <text>(6R)-10-formyltetrahydrofolate + 5-amino-1-(5-phospho-beta-D-ribosyl)imidazole-4-carboxamide = 5-formamido-1-(5-phospho-D-ribosyl)imidazole-4-carboxamide + (6S)-5,6,7,8-tetrahydrofolate</text>
        <dbReference type="Rhea" id="RHEA:22192"/>
        <dbReference type="ChEBI" id="CHEBI:57453"/>
        <dbReference type="ChEBI" id="CHEBI:58467"/>
        <dbReference type="ChEBI" id="CHEBI:58475"/>
        <dbReference type="ChEBI" id="CHEBI:195366"/>
        <dbReference type="EC" id="2.1.2.3"/>
    </reaction>
</comment>
<comment type="catalytic activity">
    <reaction evidence="1">
        <text>IMP + H2O = 5-formamido-1-(5-phospho-D-ribosyl)imidazole-4-carboxamide</text>
        <dbReference type="Rhea" id="RHEA:18445"/>
        <dbReference type="ChEBI" id="CHEBI:15377"/>
        <dbReference type="ChEBI" id="CHEBI:58053"/>
        <dbReference type="ChEBI" id="CHEBI:58467"/>
        <dbReference type="EC" id="3.5.4.10"/>
    </reaction>
</comment>
<comment type="pathway">
    <text evidence="1">Purine metabolism; IMP biosynthesis via de novo pathway; 5-formamido-1-(5-phospho-D-ribosyl)imidazole-4-carboxamide from 5-amino-1-(5-phospho-D-ribosyl)imidazole-4-carboxamide (10-formyl THF route): step 1/1.</text>
</comment>
<comment type="pathway">
    <text evidence="1">Purine metabolism; IMP biosynthesis via de novo pathway; IMP from 5-formamido-1-(5-phospho-D-ribosyl)imidazole-4-carboxamide: step 1/1.</text>
</comment>
<comment type="domain">
    <text evidence="1">The IMP cyclohydrolase activity resides in the N-terminal region.</text>
</comment>
<comment type="similarity">
    <text evidence="1">Belongs to the PurH family.</text>
</comment>
<accession>A7MJ89</accession>
<evidence type="ECO:0000255" key="1">
    <source>
        <dbReference type="HAMAP-Rule" id="MF_00139"/>
    </source>
</evidence>
<evidence type="ECO:0000255" key="2">
    <source>
        <dbReference type="PROSITE-ProRule" id="PRU01202"/>
    </source>
</evidence>
<reference key="1">
    <citation type="journal article" date="2010" name="PLoS ONE">
        <title>Genome sequence of Cronobacter sakazakii BAA-894 and comparative genomic hybridization analysis with other Cronobacter species.</title>
        <authorList>
            <person name="Kucerova E."/>
            <person name="Clifton S.W."/>
            <person name="Xia X.Q."/>
            <person name="Long F."/>
            <person name="Porwollik S."/>
            <person name="Fulton L."/>
            <person name="Fronick C."/>
            <person name="Minx P."/>
            <person name="Kyung K."/>
            <person name="Warren W."/>
            <person name="Fulton R."/>
            <person name="Feng D."/>
            <person name="Wollam A."/>
            <person name="Shah N."/>
            <person name="Bhonagiri V."/>
            <person name="Nash W.E."/>
            <person name="Hallsworth-Pepin K."/>
            <person name="Wilson R.K."/>
            <person name="McClelland M."/>
            <person name="Forsythe S.J."/>
        </authorList>
    </citation>
    <scope>NUCLEOTIDE SEQUENCE [LARGE SCALE GENOMIC DNA]</scope>
    <source>
        <strain>ATCC BAA-894</strain>
    </source>
</reference>
<dbReference type="EC" id="2.1.2.3" evidence="1"/>
<dbReference type="EC" id="3.5.4.10" evidence="1"/>
<dbReference type="EMBL" id="CP000783">
    <property type="protein sequence ID" value="ABU78874.1"/>
    <property type="molecule type" value="Genomic_DNA"/>
</dbReference>
<dbReference type="RefSeq" id="WP_012126003.1">
    <property type="nucleotide sequence ID" value="NC_009778.1"/>
</dbReference>
<dbReference type="SMR" id="A7MJ89"/>
<dbReference type="GeneID" id="56732323"/>
<dbReference type="KEGG" id="esa:ESA_03670"/>
<dbReference type="HOGENOM" id="CLU_016316_5_2_6"/>
<dbReference type="UniPathway" id="UPA00074">
    <property type="reaction ID" value="UER00133"/>
</dbReference>
<dbReference type="UniPathway" id="UPA00074">
    <property type="reaction ID" value="UER00135"/>
</dbReference>
<dbReference type="Proteomes" id="UP000000260">
    <property type="component" value="Chromosome"/>
</dbReference>
<dbReference type="GO" id="GO:0005829">
    <property type="term" value="C:cytosol"/>
    <property type="evidence" value="ECO:0007669"/>
    <property type="project" value="TreeGrafter"/>
</dbReference>
<dbReference type="GO" id="GO:0003937">
    <property type="term" value="F:IMP cyclohydrolase activity"/>
    <property type="evidence" value="ECO:0007669"/>
    <property type="project" value="UniProtKB-UniRule"/>
</dbReference>
<dbReference type="GO" id="GO:0004643">
    <property type="term" value="F:phosphoribosylaminoimidazolecarboxamide formyltransferase activity"/>
    <property type="evidence" value="ECO:0007669"/>
    <property type="project" value="UniProtKB-UniRule"/>
</dbReference>
<dbReference type="GO" id="GO:0006189">
    <property type="term" value="P:'de novo' IMP biosynthetic process"/>
    <property type="evidence" value="ECO:0007669"/>
    <property type="project" value="UniProtKB-UniRule"/>
</dbReference>
<dbReference type="CDD" id="cd01421">
    <property type="entry name" value="IMPCH"/>
    <property type="match status" value="1"/>
</dbReference>
<dbReference type="FunFam" id="3.40.140.20:FF:000001">
    <property type="entry name" value="Bifunctional purine biosynthesis protein PurH"/>
    <property type="match status" value="1"/>
</dbReference>
<dbReference type="FunFam" id="3.40.140.20:FF:000002">
    <property type="entry name" value="Bifunctional purine biosynthesis protein PurH"/>
    <property type="match status" value="1"/>
</dbReference>
<dbReference type="FunFam" id="3.40.50.1380:FF:000001">
    <property type="entry name" value="Bifunctional purine biosynthesis protein PurH"/>
    <property type="match status" value="1"/>
</dbReference>
<dbReference type="Gene3D" id="3.40.140.20">
    <property type="match status" value="2"/>
</dbReference>
<dbReference type="Gene3D" id="3.40.50.1380">
    <property type="entry name" value="Methylglyoxal synthase-like domain"/>
    <property type="match status" value="1"/>
</dbReference>
<dbReference type="HAMAP" id="MF_00139">
    <property type="entry name" value="PurH"/>
    <property type="match status" value="1"/>
</dbReference>
<dbReference type="InterPro" id="IPR024051">
    <property type="entry name" value="AICAR_Tfase_dup_dom_sf"/>
</dbReference>
<dbReference type="InterPro" id="IPR016193">
    <property type="entry name" value="Cytidine_deaminase-like"/>
</dbReference>
<dbReference type="InterPro" id="IPR011607">
    <property type="entry name" value="MGS-like_dom"/>
</dbReference>
<dbReference type="InterPro" id="IPR036914">
    <property type="entry name" value="MGS-like_dom_sf"/>
</dbReference>
<dbReference type="InterPro" id="IPR002695">
    <property type="entry name" value="PurH-like"/>
</dbReference>
<dbReference type="NCBIfam" id="NF002049">
    <property type="entry name" value="PRK00881.1"/>
    <property type="match status" value="1"/>
</dbReference>
<dbReference type="NCBIfam" id="TIGR00355">
    <property type="entry name" value="purH"/>
    <property type="match status" value="1"/>
</dbReference>
<dbReference type="PANTHER" id="PTHR11692:SF0">
    <property type="entry name" value="BIFUNCTIONAL PURINE BIOSYNTHESIS PROTEIN ATIC"/>
    <property type="match status" value="1"/>
</dbReference>
<dbReference type="PANTHER" id="PTHR11692">
    <property type="entry name" value="BIFUNCTIONAL PURINE BIOSYNTHESIS PROTEIN PURH"/>
    <property type="match status" value="1"/>
</dbReference>
<dbReference type="Pfam" id="PF01808">
    <property type="entry name" value="AICARFT_IMPCHas"/>
    <property type="match status" value="1"/>
</dbReference>
<dbReference type="Pfam" id="PF02142">
    <property type="entry name" value="MGS"/>
    <property type="match status" value="1"/>
</dbReference>
<dbReference type="PIRSF" id="PIRSF000414">
    <property type="entry name" value="AICARFT_IMPCHas"/>
    <property type="match status" value="1"/>
</dbReference>
<dbReference type="SMART" id="SM00798">
    <property type="entry name" value="AICARFT_IMPCHas"/>
    <property type="match status" value="1"/>
</dbReference>
<dbReference type="SMART" id="SM00851">
    <property type="entry name" value="MGS"/>
    <property type="match status" value="1"/>
</dbReference>
<dbReference type="SUPFAM" id="SSF53927">
    <property type="entry name" value="Cytidine deaminase-like"/>
    <property type="match status" value="1"/>
</dbReference>
<dbReference type="SUPFAM" id="SSF52335">
    <property type="entry name" value="Methylglyoxal synthase-like"/>
    <property type="match status" value="1"/>
</dbReference>
<dbReference type="PROSITE" id="PS51855">
    <property type="entry name" value="MGS"/>
    <property type="match status" value="1"/>
</dbReference>
<sequence length="529" mass="57244">MQQPRPVRRALLSVSDKAGIVDFARALSTRGVELLSTGGTARLLAEAGLPVTEVSDYTGFPEMMDGRVKTLHPKVHGGILGRRGQDDDIMAQHAISPIDMVVVNLYPFAQTVAREGCTLEDAVENIDIGGPTMVRSAAKNHKDVAIVVKSSDYTAIIDELDANNGSLTFDTRFDLAIKAFEHTAAYDSMIANYFGSLVPAYHGETTAPAGRFPRTLNLNFIKKQDMRYGENSHQQAAFYIEEEIKEASVATARQVQGKALSYNNIADTDAALECVKEFSEPACVIVKHANPCGVAVSSSILDAYDRAYKTDPTSAFGGIIAFNRELDAETAQAIVSRQFVEVIIAPSASDDALKITAAKQNVRVLVCGEWQSRVPGLDFKRVNGGLLVQDRDLGMVTEADLRVVTKRQPTEQELRDALFCWKVAKFVKSNAIVYARDNMTIGIGAGQMSRVYSAKIAGIKAGDEGLEVKGSAMASDAFFPFRDGIDAAAAVGITCVIQPGGSIRDDEVIAAADEHGIAMIFTDMRHFRH</sequence>
<gene>
    <name evidence="1" type="primary">purH</name>
    <name type="ordered locus">ESA_03670</name>
</gene>